<feature type="chain" id="PRO_1000087134" description="Large ribosomal subunit protein uL14">
    <location>
        <begin position="1"/>
        <end position="122"/>
    </location>
</feature>
<comment type="function">
    <text evidence="1">Binds to 23S rRNA. Forms part of two intersubunit bridges in the 70S ribosome.</text>
</comment>
<comment type="subunit">
    <text evidence="1">Part of the 50S ribosomal subunit. Forms a cluster with proteins L3 and L19. In the 70S ribosome, L14 and L19 interact and together make contacts with the 16S rRNA in bridges B5 and B8.</text>
</comment>
<comment type="similarity">
    <text evidence="1">Belongs to the universal ribosomal protein uL14 family.</text>
</comment>
<protein>
    <recommendedName>
        <fullName evidence="1">Large ribosomal subunit protein uL14</fullName>
    </recommendedName>
    <alternativeName>
        <fullName evidence="2">50S ribosomal protein L14</fullName>
    </alternativeName>
</protein>
<keyword id="KW-0687">Ribonucleoprotein</keyword>
<keyword id="KW-0689">Ribosomal protein</keyword>
<keyword id="KW-0694">RNA-binding</keyword>
<keyword id="KW-0699">rRNA-binding</keyword>
<sequence>MIQTESMLDVADNSGAKRVQCIKVLGGSHRRYAAIGDIIKVTVKEAIPRGRVKKGQVLNAVVVRTRKGVRRSDGSVIRFDVNSAVLLNASGQPIGTRIFGPVTRELRTEQFMKIVSLAPEVL</sequence>
<proteinExistence type="inferred from homology"/>
<reference key="1">
    <citation type="submission" date="2007-06" db="EMBL/GenBank/DDBJ databases">
        <title>Complete sequence of Marinomonas sp. MWYL1.</title>
        <authorList>
            <consortium name="US DOE Joint Genome Institute"/>
            <person name="Copeland A."/>
            <person name="Lucas S."/>
            <person name="Lapidus A."/>
            <person name="Barry K."/>
            <person name="Glavina del Rio T."/>
            <person name="Dalin E."/>
            <person name="Tice H."/>
            <person name="Pitluck S."/>
            <person name="Kiss H."/>
            <person name="Brettin T."/>
            <person name="Bruce D."/>
            <person name="Detter J.C."/>
            <person name="Han C."/>
            <person name="Schmutz J."/>
            <person name="Larimer F."/>
            <person name="Land M."/>
            <person name="Hauser L."/>
            <person name="Kyrpides N."/>
            <person name="Kim E."/>
            <person name="Johnston A.W.B."/>
            <person name="Todd J.D."/>
            <person name="Rogers R."/>
            <person name="Wexler M."/>
            <person name="Bond P.L."/>
            <person name="Li Y."/>
            <person name="Richardson P."/>
        </authorList>
    </citation>
    <scope>NUCLEOTIDE SEQUENCE [LARGE SCALE GENOMIC DNA]</scope>
    <source>
        <strain>MWYL1</strain>
    </source>
</reference>
<evidence type="ECO:0000255" key="1">
    <source>
        <dbReference type="HAMAP-Rule" id="MF_01367"/>
    </source>
</evidence>
<evidence type="ECO:0000305" key="2"/>
<dbReference type="EMBL" id="CP000749">
    <property type="protein sequence ID" value="ABR73161.1"/>
    <property type="molecule type" value="Genomic_DNA"/>
</dbReference>
<dbReference type="SMR" id="A6W382"/>
<dbReference type="STRING" id="400668.Mmwyl1_4266"/>
<dbReference type="KEGG" id="mmw:Mmwyl1_4266"/>
<dbReference type="eggNOG" id="COG0093">
    <property type="taxonomic scope" value="Bacteria"/>
</dbReference>
<dbReference type="HOGENOM" id="CLU_095071_2_1_6"/>
<dbReference type="OrthoDB" id="9806379at2"/>
<dbReference type="GO" id="GO:0022625">
    <property type="term" value="C:cytosolic large ribosomal subunit"/>
    <property type="evidence" value="ECO:0007669"/>
    <property type="project" value="TreeGrafter"/>
</dbReference>
<dbReference type="GO" id="GO:0070180">
    <property type="term" value="F:large ribosomal subunit rRNA binding"/>
    <property type="evidence" value="ECO:0007669"/>
    <property type="project" value="TreeGrafter"/>
</dbReference>
<dbReference type="GO" id="GO:0003735">
    <property type="term" value="F:structural constituent of ribosome"/>
    <property type="evidence" value="ECO:0007669"/>
    <property type="project" value="InterPro"/>
</dbReference>
<dbReference type="GO" id="GO:0006412">
    <property type="term" value="P:translation"/>
    <property type="evidence" value="ECO:0007669"/>
    <property type="project" value="UniProtKB-UniRule"/>
</dbReference>
<dbReference type="CDD" id="cd00337">
    <property type="entry name" value="Ribosomal_uL14"/>
    <property type="match status" value="1"/>
</dbReference>
<dbReference type="FunFam" id="2.40.150.20:FF:000001">
    <property type="entry name" value="50S ribosomal protein L14"/>
    <property type="match status" value="1"/>
</dbReference>
<dbReference type="Gene3D" id="2.40.150.20">
    <property type="entry name" value="Ribosomal protein L14"/>
    <property type="match status" value="1"/>
</dbReference>
<dbReference type="HAMAP" id="MF_01367">
    <property type="entry name" value="Ribosomal_uL14"/>
    <property type="match status" value="1"/>
</dbReference>
<dbReference type="InterPro" id="IPR000218">
    <property type="entry name" value="Ribosomal_uL14"/>
</dbReference>
<dbReference type="InterPro" id="IPR005745">
    <property type="entry name" value="Ribosomal_uL14_bac-type"/>
</dbReference>
<dbReference type="InterPro" id="IPR019972">
    <property type="entry name" value="Ribosomal_uL14_CS"/>
</dbReference>
<dbReference type="InterPro" id="IPR036853">
    <property type="entry name" value="Ribosomal_uL14_sf"/>
</dbReference>
<dbReference type="NCBIfam" id="TIGR01067">
    <property type="entry name" value="rplN_bact"/>
    <property type="match status" value="1"/>
</dbReference>
<dbReference type="PANTHER" id="PTHR11761">
    <property type="entry name" value="50S/60S RIBOSOMAL PROTEIN L14/L23"/>
    <property type="match status" value="1"/>
</dbReference>
<dbReference type="PANTHER" id="PTHR11761:SF3">
    <property type="entry name" value="LARGE RIBOSOMAL SUBUNIT PROTEIN UL14M"/>
    <property type="match status" value="1"/>
</dbReference>
<dbReference type="Pfam" id="PF00238">
    <property type="entry name" value="Ribosomal_L14"/>
    <property type="match status" value="1"/>
</dbReference>
<dbReference type="SMART" id="SM01374">
    <property type="entry name" value="Ribosomal_L14"/>
    <property type="match status" value="1"/>
</dbReference>
<dbReference type="SUPFAM" id="SSF50193">
    <property type="entry name" value="Ribosomal protein L14"/>
    <property type="match status" value="1"/>
</dbReference>
<dbReference type="PROSITE" id="PS00049">
    <property type="entry name" value="RIBOSOMAL_L14"/>
    <property type="match status" value="1"/>
</dbReference>
<accession>A6W382</accession>
<name>RL14_MARMS</name>
<gene>
    <name evidence="1" type="primary">rplN</name>
    <name type="ordered locus">Mmwyl1_4266</name>
</gene>
<organism>
    <name type="scientific">Marinomonas sp. (strain MWYL1)</name>
    <dbReference type="NCBI Taxonomy" id="400668"/>
    <lineage>
        <taxon>Bacteria</taxon>
        <taxon>Pseudomonadati</taxon>
        <taxon>Pseudomonadota</taxon>
        <taxon>Gammaproteobacteria</taxon>
        <taxon>Oceanospirillales</taxon>
        <taxon>Oceanospirillaceae</taxon>
        <taxon>Marinomonas</taxon>
    </lineage>
</organism>